<keyword id="KW-0028">Amino-acid biosynthesis</keyword>
<keyword id="KW-0963">Cytoplasm</keyword>
<keyword id="KW-0368">Histidine biosynthesis</keyword>
<keyword id="KW-0456">Lyase</keyword>
<keyword id="KW-1185">Reference proteome</keyword>
<evidence type="ECO:0000255" key="1">
    <source>
        <dbReference type="HAMAP-Rule" id="MF_01013"/>
    </source>
</evidence>
<feature type="chain" id="PRO_0000142205" description="Imidazole glycerol phosphate synthase subunit HisF">
    <location>
        <begin position="1"/>
        <end position="257"/>
    </location>
</feature>
<feature type="active site" evidence="1">
    <location>
        <position position="11"/>
    </location>
</feature>
<feature type="active site" evidence="1">
    <location>
        <position position="130"/>
    </location>
</feature>
<organism>
    <name type="scientific">Pseudoalteromonas translucida (strain TAC 125)</name>
    <dbReference type="NCBI Taxonomy" id="326442"/>
    <lineage>
        <taxon>Bacteria</taxon>
        <taxon>Pseudomonadati</taxon>
        <taxon>Pseudomonadota</taxon>
        <taxon>Gammaproteobacteria</taxon>
        <taxon>Alteromonadales</taxon>
        <taxon>Pseudoalteromonadaceae</taxon>
        <taxon>Pseudoalteromonas</taxon>
    </lineage>
</organism>
<protein>
    <recommendedName>
        <fullName evidence="1">Imidazole glycerol phosphate synthase subunit HisF</fullName>
        <ecNumber evidence="1">4.3.2.10</ecNumber>
    </recommendedName>
    <alternativeName>
        <fullName evidence="1">IGP synthase cyclase subunit</fullName>
    </alternativeName>
    <alternativeName>
        <fullName evidence="1">IGP synthase subunit HisF</fullName>
    </alternativeName>
    <alternativeName>
        <fullName evidence="1">ImGP synthase subunit HisF</fullName>
        <shortName evidence="1">IGPS subunit HisF</shortName>
    </alternativeName>
</protein>
<reference key="1">
    <citation type="journal article" date="2005" name="Genome Res.">
        <title>Coping with cold: the genome of the versatile marine Antarctica bacterium Pseudoalteromonas haloplanktis TAC125.</title>
        <authorList>
            <person name="Medigue C."/>
            <person name="Krin E."/>
            <person name="Pascal G."/>
            <person name="Barbe V."/>
            <person name="Bernsel A."/>
            <person name="Bertin P.N."/>
            <person name="Cheung F."/>
            <person name="Cruveiller S."/>
            <person name="D'Amico S."/>
            <person name="Duilio A."/>
            <person name="Fang G."/>
            <person name="Feller G."/>
            <person name="Ho C."/>
            <person name="Mangenot S."/>
            <person name="Marino G."/>
            <person name="Nilsson J."/>
            <person name="Parrilli E."/>
            <person name="Rocha E.P.C."/>
            <person name="Rouy Z."/>
            <person name="Sekowska A."/>
            <person name="Tutino M.L."/>
            <person name="Vallenet D."/>
            <person name="von Heijne G."/>
            <person name="Danchin A."/>
        </authorList>
    </citation>
    <scope>NUCLEOTIDE SEQUENCE [LARGE SCALE GENOMIC DNA]</scope>
    <source>
        <strain>TAC 125</strain>
    </source>
</reference>
<dbReference type="EC" id="4.3.2.10" evidence="1"/>
<dbReference type="EMBL" id="CR954247">
    <property type="protein sequence ID" value="CAI89520.1"/>
    <property type="molecule type" value="Genomic_DNA"/>
</dbReference>
<dbReference type="SMR" id="Q3ICD4"/>
<dbReference type="STRING" id="326442.PSHAb0483"/>
<dbReference type="KEGG" id="pha:PSHAb0483"/>
<dbReference type="eggNOG" id="COG0107">
    <property type="taxonomic scope" value="Bacteria"/>
</dbReference>
<dbReference type="HOGENOM" id="CLU_048577_4_0_6"/>
<dbReference type="BioCyc" id="PHAL326442:PSHA_RS17165-MONOMER"/>
<dbReference type="UniPathway" id="UPA00031">
    <property type="reaction ID" value="UER00010"/>
</dbReference>
<dbReference type="Proteomes" id="UP000006843">
    <property type="component" value="Chromosome II"/>
</dbReference>
<dbReference type="GO" id="GO:0005737">
    <property type="term" value="C:cytoplasm"/>
    <property type="evidence" value="ECO:0007669"/>
    <property type="project" value="UniProtKB-SubCell"/>
</dbReference>
<dbReference type="GO" id="GO:0000107">
    <property type="term" value="F:imidazoleglycerol-phosphate synthase activity"/>
    <property type="evidence" value="ECO:0007669"/>
    <property type="project" value="UniProtKB-UniRule"/>
</dbReference>
<dbReference type="GO" id="GO:0016829">
    <property type="term" value="F:lyase activity"/>
    <property type="evidence" value="ECO:0007669"/>
    <property type="project" value="UniProtKB-KW"/>
</dbReference>
<dbReference type="GO" id="GO:0000105">
    <property type="term" value="P:L-histidine biosynthetic process"/>
    <property type="evidence" value="ECO:0007669"/>
    <property type="project" value="UniProtKB-UniRule"/>
</dbReference>
<dbReference type="CDD" id="cd04731">
    <property type="entry name" value="HisF"/>
    <property type="match status" value="1"/>
</dbReference>
<dbReference type="FunFam" id="3.20.20.70:FF:000006">
    <property type="entry name" value="Imidazole glycerol phosphate synthase subunit HisF"/>
    <property type="match status" value="1"/>
</dbReference>
<dbReference type="Gene3D" id="3.20.20.70">
    <property type="entry name" value="Aldolase class I"/>
    <property type="match status" value="1"/>
</dbReference>
<dbReference type="HAMAP" id="MF_01013">
    <property type="entry name" value="HisF"/>
    <property type="match status" value="1"/>
</dbReference>
<dbReference type="InterPro" id="IPR013785">
    <property type="entry name" value="Aldolase_TIM"/>
</dbReference>
<dbReference type="InterPro" id="IPR006062">
    <property type="entry name" value="His_biosynth"/>
</dbReference>
<dbReference type="InterPro" id="IPR004651">
    <property type="entry name" value="HisF"/>
</dbReference>
<dbReference type="InterPro" id="IPR050064">
    <property type="entry name" value="IGPS_HisA/HisF"/>
</dbReference>
<dbReference type="InterPro" id="IPR011060">
    <property type="entry name" value="RibuloseP-bd_barrel"/>
</dbReference>
<dbReference type="NCBIfam" id="TIGR00735">
    <property type="entry name" value="hisF"/>
    <property type="match status" value="1"/>
</dbReference>
<dbReference type="PANTHER" id="PTHR21235:SF2">
    <property type="entry name" value="IMIDAZOLE GLYCEROL PHOSPHATE SYNTHASE HISHF"/>
    <property type="match status" value="1"/>
</dbReference>
<dbReference type="PANTHER" id="PTHR21235">
    <property type="entry name" value="IMIDAZOLE GLYCEROL PHOSPHATE SYNTHASE SUBUNIT HISF/H IGP SYNTHASE SUBUNIT HISF/H"/>
    <property type="match status" value="1"/>
</dbReference>
<dbReference type="Pfam" id="PF00977">
    <property type="entry name" value="His_biosynth"/>
    <property type="match status" value="1"/>
</dbReference>
<dbReference type="SUPFAM" id="SSF51366">
    <property type="entry name" value="Ribulose-phoshate binding barrel"/>
    <property type="match status" value="1"/>
</dbReference>
<sequence>MLSKRIIPCLDVKDGQVVKGVKFKGHEVVGDILTMAKAYSEAGADELVFYEISASVEKRLLDVNWVESIARHIDIPFCVAGGIKSVADAARVLERGADKISINSPAIARPELIKELHDEFGKQCVVVGIDSFYDEVTGEYLVYQLTGDPNASSRTRYKTQEWVKRVQDLGAGEIVLNCMNQDGVRNGYDIEQLSKIRELCNIPLIASGGAGSMQDFVDVFKQSEVDGALAASVFHKNVINIGELKQFLTNNQVAARL</sequence>
<proteinExistence type="inferred from homology"/>
<accession>Q3ICD4</accession>
<gene>
    <name evidence="1" type="primary">hisF</name>
    <name type="ordered locus">PSHAb0483</name>
</gene>
<comment type="function">
    <text evidence="1">IGPS catalyzes the conversion of PRFAR and glutamine to IGP, AICAR and glutamate. The HisF subunit catalyzes the cyclization activity that produces IGP and AICAR from PRFAR using the ammonia provided by the HisH subunit.</text>
</comment>
<comment type="catalytic activity">
    <reaction evidence="1">
        <text>5-[(5-phospho-1-deoxy-D-ribulos-1-ylimino)methylamino]-1-(5-phospho-beta-D-ribosyl)imidazole-4-carboxamide + L-glutamine = D-erythro-1-(imidazol-4-yl)glycerol 3-phosphate + 5-amino-1-(5-phospho-beta-D-ribosyl)imidazole-4-carboxamide + L-glutamate + H(+)</text>
        <dbReference type="Rhea" id="RHEA:24793"/>
        <dbReference type="ChEBI" id="CHEBI:15378"/>
        <dbReference type="ChEBI" id="CHEBI:29985"/>
        <dbReference type="ChEBI" id="CHEBI:58278"/>
        <dbReference type="ChEBI" id="CHEBI:58359"/>
        <dbReference type="ChEBI" id="CHEBI:58475"/>
        <dbReference type="ChEBI" id="CHEBI:58525"/>
        <dbReference type="EC" id="4.3.2.10"/>
    </reaction>
</comment>
<comment type="pathway">
    <text evidence="1">Amino-acid biosynthesis; L-histidine biosynthesis; L-histidine from 5-phospho-alpha-D-ribose 1-diphosphate: step 5/9.</text>
</comment>
<comment type="subunit">
    <text evidence="1">Heterodimer of HisH and HisF.</text>
</comment>
<comment type="subcellular location">
    <subcellularLocation>
        <location evidence="1">Cytoplasm</location>
    </subcellularLocation>
</comment>
<comment type="similarity">
    <text evidence="1">Belongs to the HisA/HisF family.</text>
</comment>
<name>HIS6_PSET1</name>